<protein>
    <recommendedName>
        <fullName evidence="1">Methylenetetrahydrofolate--tRNA-(uracil-5-)-methyltransferase TrmFO</fullName>
        <ecNumber evidence="1">2.1.1.74</ecNumber>
    </recommendedName>
    <alternativeName>
        <fullName evidence="1">Folate-dependent tRNA (uracil-5-)-methyltransferase</fullName>
    </alternativeName>
    <alternativeName>
        <fullName evidence="1">Folate-dependent tRNA(M-5-U54)-methyltransferase</fullName>
    </alternativeName>
</protein>
<gene>
    <name evidence="1" type="primary">trmFO</name>
    <name type="ordered locus">RPC_2772</name>
</gene>
<keyword id="KW-0963">Cytoplasm</keyword>
<keyword id="KW-0274">FAD</keyword>
<keyword id="KW-0285">Flavoprotein</keyword>
<keyword id="KW-0489">Methyltransferase</keyword>
<keyword id="KW-0520">NAD</keyword>
<keyword id="KW-0521">NADP</keyword>
<keyword id="KW-0808">Transferase</keyword>
<keyword id="KW-0819">tRNA processing</keyword>
<comment type="function">
    <text evidence="1">Catalyzes the folate-dependent formation of 5-methyl-uridine at position 54 (M-5-U54) in all tRNAs.</text>
</comment>
<comment type="catalytic activity">
    <reaction evidence="1">
        <text>uridine(54) in tRNA + (6R)-5,10-methylene-5,6,7,8-tetrahydrofolate + NADH + H(+) = 5-methyluridine(54) in tRNA + (6S)-5,6,7,8-tetrahydrofolate + NAD(+)</text>
        <dbReference type="Rhea" id="RHEA:16873"/>
        <dbReference type="Rhea" id="RHEA-COMP:10167"/>
        <dbReference type="Rhea" id="RHEA-COMP:10193"/>
        <dbReference type="ChEBI" id="CHEBI:15378"/>
        <dbReference type="ChEBI" id="CHEBI:15636"/>
        <dbReference type="ChEBI" id="CHEBI:57453"/>
        <dbReference type="ChEBI" id="CHEBI:57540"/>
        <dbReference type="ChEBI" id="CHEBI:57945"/>
        <dbReference type="ChEBI" id="CHEBI:65315"/>
        <dbReference type="ChEBI" id="CHEBI:74447"/>
        <dbReference type="EC" id="2.1.1.74"/>
    </reaction>
</comment>
<comment type="catalytic activity">
    <reaction evidence="1">
        <text>uridine(54) in tRNA + (6R)-5,10-methylene-5,6,7,8-tetrahydrofolate + NADPH + H(+) = 5-methyluridine(54) in tRNA + (6S)-5,6,7,8-tetrahydrofolate + NADP(+)</text>
        <dbReference type="Rhea" id="RHEA:62372"/>
        <dbReference type="Rhea" id="RHEA-COMP:10167"/>
        <dbReference type="Rhea" id="RHEA-COMP:10193"/>
        <dbReference type="ChEBI" id="CHEBI:15378"/>
        <dbReference type="ChEBI" id="CHEBI:15636"/>
        <dbReference type="ChEBI" id="CHEBI:57453"/>
        <dbReference type="ChEBI" id="CHEBI:57783"/>
        <dbReference type="ChEBI" id="CHEBI:58349"/>
        <dbReference type="ChEBI" id="CHEBI:65315"/>
        <dbReference type="ChEBI" id="CHEBI:74447"/>
        <dbReference type="EC" id="2.1.1.74"/>
    </reaction>
</comment>
<comment type="cofactor">
    <cofactor evidence="1">
        <name>FAD</name>
        <dbReference type="ChEBI" id="CHEBI:57692"/>
    </cofactor>
</comment>
<comment type="subcellular location">
    <subcellularLocation>
        <location evidence="1">Cytoplasm</location>
    </subcellularLocation>
</comment>
<comment type="similarity">
    <text evidence="1">Belongs to the MnmG family. TrmFO subfamily.</text>
</comment>
<accession>Q213W6</accession>
<sequence length="476" mass="50658">MITDPLKTVHVVGGGLAGSEAAWQIAQAGVRVVLHEMRPARMTEAHRTEGLAELVCSNSFRSDDAANNAVGLLHAEMRKLGSLVMRAADANQVPAGGALAVDRDGFSAAVTKALAEHPLIELQRGELDGLPPSDWGHVVIATGPLTSAPLASAIQALTGEDSLAFFDAIAPIVHRDSIDMSVAWFQSRYDKVGPGGNGADYINCPMTREQYEGFVAALISGDKVDFKDWETNTPYFDGCLPIEVMAERGAETLRFGPMKPVGLTNPKDPTVKPYAIVQLRQDNKLGTLYNLVGFQTKLKHGEQSRIFRSIPGLENAEFARLGGLHRNTFLNSPKLLDQQLRLRAEPRLRFAGQMTGCEGYVESASIGLIAGLYAAAEARDIALAPPPSTTALGALLGHITGGHIETIDAGPRSFQPMNVNFGLFPPLESPPTHGADGKKLRGPDKTVAKKQALSARALADLDGWIAENLPGAAAAA</sequence>
<feature type="chain" id="PRO_0000346387" description="Methylenetetrahydrofolate--tRNA-(uracil-5-)-methyltransferase TrmFO">
    <location>
        <begin position="1"/>
        <end position="476"/>
    </location>
</feature>
<feature type="region of interest" description="Disordered" evidence="2">
    <location>
        <begin position="425"/>
        <end position="446"/>
    </location>
</feature>
<feature type="compositionally biased region" description="Basic and acidic residues" evidence="2">
    <location>
        <begin position="435"/>
        <end position="446"/>
    </location>
</feature>
<feature type="binding site" evidence="1">
    <location>
        <begin position="13"/>
        <end position="18"/>
    </location>
    <ligand>
        <name>FAD</name>
        <dbReference type="ChEBI" id="CHEBI:57692"/>
    </ligand>
</feature>
<organism>
    <name type="scientific">Rhodopseudomonas palustris (strain BisB18)</name>
    <dbReference type="NCBI Taxonomy" id="316056"/>
    <lineage>
        <taxon>Bacteria</taxon>
        <taxon>Pseudomonadati</taxon>
        <taxon>Pseudomonadota</taxon>
        <taxon>Alphaproteobacteria</taxon>
        <taxon>Hyphomicrobiales</taxon>
        <taxon>Nitrobacteraceae</taxon>
        <taxon>Rhodopseudomonas</taxon>
    </lineage>
</organism>
<name>TRMFO_RHOPB</name>
<reference key="1">
    <citation type="submission" date="2006-03" db="EMBL/GenBank/DDBJ databases">
        <title>Complete sequence of Rhodopseudomonas palustris BisB18.</title>
        <authorList>
            <consortium name="US DOE Joint Genome Institute"/>
            <person name="Copeland A."/>
            <person name="Lucas S."/>
            <person name="Lapidus A."/>
            <person name="Barry K."/>
            <person name="Detter J.C."/>
            <person name="Glavina del Rio T."/>
            <person name="Hammon N."/>
            <person name="Israni S."/>
            <person name="Dalin E."/>
            <person name="Tice H."/>
            <person name="Pitluck S."/>
            <person name="Chain P."/>
            <person name="Malfatti S."/>
            <person name="Shin M."/>
            <person name="Vergez L."/>
            <person name="Schmutz J."/>
            <person name="Larimer F."/>
            <person name="Land M."/>
            <person name="Hauser L."/>
            <person name="Pelletier D.A."/>
            <person name="Kyrpides N."/>
            <person name="Anderson I."/>
            <person name="Oda Y."/>
            <person name="Harwood C.S."/>
            <person name="Richardson P."/>
        </authorList>
    </citation>
    <scope>NUCLEOTIDE SEQUENCE [LARGE SCALE GENOMIC DNA]</scope>
    <source>
        <strain>BisB18</strain>
    </source>
</reference>
<proteinExistence type="inferred from homology"/>
<dbReference type="EC" id="2.1.1.74" evidence="1"/>
<dbReference type="EMBL" id="CP000301">
    <property type="protein sequence ID" value="ABD88320.1"/>
    <property type="molecule type" value="Genomic_DNA"/>
</dbReference>
<dbReference type="SMR" id="Q213W6"/>
<dbReference type="STRING" id="316056.RPC_2772"/>
<dbReference type="KEGG" id="rpc:RPC_2772"/>
<dbReference type="eggNOG" id="COG1206">
    <property type="taxonomic scope" value="Bacteria"/>
</dbReference>
<dbReference type="HOGENOM" id="CLU_033057_1_0_5"/>
<dbReference type="OrthoDB" id="9803114at2"/>
<dbReference type="GO" id="GO:0005829">
    <property type="term" value="C:cytosol"/>
    <property type="evidence" value="ECO:0007669"/>
    <property type="project" value="TreeGrafter"/>
</dbReference>
<dbReference type="GO" id="GO:0050660">
    <property type="term" value="F:flavin adenine dinucleotide binding"/>
    <property type="evidence" value="ECO:0007669"/>
    <property type="project" value="UniProtKB-UniRule"/>
</dbReference>
<dbReference type="GO" id="GO:0047151">
    <property type="term" value="F:tRNA (uracil(54)-C5)-methyltransferase activity, 5,10-methylenetetrahydrofolate-dependent"/>
    <property type="evidence" value="ECO:0007669"/>
    <property type="project" value="UniProtKB-UniRule"/>
</dbReference>
<dbReference type="GO" id="GO:0030488">
    <property type="term" value="P:tRNA methylation"/>
    <property type="evidence" value="ECO:0007669"/>
    <property type="project" value="TreeGrafter"/>
</dbReference>
<dbReference type="GO" id="GO:0002098">
    <property type="term" value="P:tRNA wobble uridine modification"/>
    <property type="evidence" value="ECO:0007669"/>
    <property type="project" value="TreeGrafter"/>
</dbReference>
<dbReference type="FunFam" id="3.50.50.60:FF:000359">
    <property type="entry name" value="Methylenetetrahydrofolate--tRNA-(uracil-5-)-methyltransferase TrmFO"/>
    <property type="match status" value="1"/>
</dbReference>
<dbReference type="Gene3D" id="3.50.50.60">
    <property type="entry name" value="FAD/NAD(P)-binding domain"/>
    <property type="match status" value="2"/>
</dbReference>
<dbReference type="HAMAP" id="MF_01037">
    <property type="entry name" value="TrmFO"/>
    <property type="match status" value="1"/>
</dbReference>
<dbReference type="InterPro" id="IPR036188">
    <property type="entry name" value="FAD/NAD-bd_sf"/>
</dbReference>
<dbReference type="InterPro" id="IPR002218">
    <property type="entry name" value="MnmG-rel"/>
</dbReference>
<dbReference type="InterPro" id="IPR020595">
    <property type="entry name" value="MnmG-rel_CS"/>
</dbReference>
<dbReference type="InterPro" id="IPR040131">
    <property type="entry name" value="MnmG_N"/>
</dbReference>
<dbReference type="InterPro" id="IPR004417">
    <property type="entry name" value="TrmFO"/>
</dbReference>
<dbReference type="NCBIfam" id="TIGR00137">
    <property type="entry name" value="gid_trmFO"/>
    <property type="match status" value="1"/>
</dbReference>
<dbReference type="NCBIfam" id="NF003739">
    <property type="entry name" value="PRK05335.1"/>
    <property type="match status" value="1"/>
</dbReference>
<dbReference type="PANTHER" id="PTHR11806">
    <property type="entry name" value="GLUCOSE INHIBITED DIVISION PROTEIN A"/>
    <property type="match status" value="1"/>
</dbReference>
<dbReference type="PANTHER" id="PTHR11806:SF2">
    <property type="entry name" value="METHYLENETETRAHYDROFOLATE--TRNA-(URACIL-5-)-METHYLTRANSFERASE TRMFO"/>
    <property type="match status" value="1"/>
</dbReference>
<dbReference type="Pfam" id="PF01134">
    <property type="entry name" value="GIDA"/>
    <property type="match status" value="1"/>
</dbReference>
<dbReference type="SUPFAM" id="SSF51905">
    <property type="entry name" value="FAD/NAD(P)-binding domain"/>
    <property type="match status" value="1"/>
</dbReference>
<dbReference type="PROSITE" id="PS01281">
    <property type="entry name" value="GIDA_2"/>
    <property type="match status" value="1"/>
</dbReference>
<evidence type="ECO:0000255" key="1">
    <source>
        <dbReference type="HAMAP-Rule" id="MF_01037"/>
    </source>
</evidence>
<evidence type="ECO:0000256" key="2">
    <source>
        <dbReference type="SAM" id="MobiDB-lite"/>
    </source>
</evidence>